<sequence length="266" mass="29983">MTVIDILTRVDSICKKYDKYDVDKQREANISGDDAFARLYGAFETQIETALEKAELVTKEKNRAAAVAMNAEIRRTKARLSEEVPKLQRLAVKRVKGLTTEELAARNDLVLALPARIEAIPDGTAGGPKSTSAWTPSSTTSRPDIKFDSDGRFDDDYFQESNESSQFRQEYEMRKIKQEQGLDMISEGLDALKNMASDMNEELDRQVPLMDEIDTKVDRATSDLKNTNVRLKDTVNQLRSSRNFCIDIVLLCIVLGIAAYLYNVLK</sequence>
<organism>
    <name type="scientific">Arabidopsis thaliana</name>
    <name type="common">Mouse-ear cress</name>
    <dbReference type="NCBI Taxonomy" id="3702"/>
    <lineage>
        <taxon>Eukaryota</taxon>
        <taxon>Viridiplantae</taxon>
        <taxon>Streptophyta</taxon>
        <taxon>Embryophyta</taxon>
        <taxon>Tracheophyta</taxon>
        <taxon>Spermatophyta</taxon>
        <taxon>Magnoliopsida</taxon>
        <taxon>eudicotyledons</taxon>
        <taxon>Gunneridae</taxon>
        <taxon>Pentapetalae</taxon>
        <taxon>rosids</taxon>
        <taxon>malvids</taxon>
        <taxon>Brassicales</taxon>
        <taxon>Brassicaceae</taxon>
        <taxon>Camelineae</taxon>
        <taxon>Arabidopsis</taxon>
    </lineage>
</organism>
<feature type="chain" id="PRO_0000210264" description="Syntaxin-71">
    <location>
        <begin position="1"/>
        <end position="266"/>
    </location>
</feature>
<feature type="topological domain" description="Cytoplasmic" evidence="2">
    <location>
        <begin position="1"/>
        <end position="243"/>
    </location>
</feature>
<feature type="transmembrane region" description="Helical; Anchor for type IV membrane protein" evidence="2">
    <location>
        <begin position="244"/>
        <end position="264"/>
    </location>
</feature>
<feature type="topological domain" description="Vesicular" evidence="2">
    <location>
        <begin position="265"/>
        <end position="266"/>
    </location>
</feature>
<feature type="domain" description="t-SNARE coiled-coil homology" evidence="3">
    <location>
        <begin position="172"/>
        <end position="234"/>
    </location>
</feature>
<feature type="region of interest" description="Disordered" evidence="4">
    <location>
        <begin position="122"/>
        <end position="146"/>
    </location>
</feature>
<feature type="coiled-coil region" evidence="2">
    <location>
        <begin position="44"/>
        <end position="87"/>
    </location>
</feature>
<feature type="compositionally biased region" description="Low complexity" evidence="4">
    <location>
        <begin position="130"/>
        <end position="141"/>
    </location>
</feature>
<feature type="modified residue" description="Phosphoserine" evidence="7">
    <location>
        <position position="12"/>
    </location>
</feature>
<protein>
    <recommendedName>
        <fullName>Syntaxin-71</fullName>
        <shortName>AtSYP71</shortName>
    </recommendedName>
</protein>
<evidence type="ECO:0000250" key="1"/>
<evidence type="ECO:0000255" key="2"/>
<evidence type="ECO:0000255" key="3">
    <source>
        <dbReference type="PROSITE-ProRule" id="PRU00202"/>
    </source>
</evidence>
<evidence type="ECO:0000256" key="4">
    <source>
        <dbReference type="SAM" id="MobiDB-lite"/>
    </source>
</evidence>
<evidence type="ECO:0000269" key="5">
    <source>
    </source>
</evidence>
<evidence type="ECO:0000305" key="6"/>
<evidence type="ECO:0007744" key="7">
    <source>
    </source>
</evidence>
<dbReference type="EMBL" id="AF355757">
    <property type="protein sequence ID" value="AAK40225.1"/>
    <property type="molecule type" value="mRNA"/>
</dbReference>
<dbReference type="EMBL" id="AC016661">
    <property type="protein sequence ID" value="AAF23303.1"/>
    <property type="molecule type" value="Genomic_DNA"/>
</dbReference>
<dbReference type="EMBL" id="CP002686">
    <property type="protein sequence ID" value="AEE74807.1"/>
    <property type="molecule type" value="Genomic_DNA"/>
</dbReference>
<dbReference type="EMBL" id="AY090358">
    <property type="protein sequence ID" value="AAL91262.1"/>
    <property type="molecule type" value="mRNA"/>
</dbReference>
<dbReference type="RefSeq" id="NP_566354.1">
    <property type="nucleotide sequence ID" value="NM_111809.5"/>
</dbReference>
<dbReference type="SMR" id="Q9SF29"/>
<dbReference type="BioGRID" id="5466">
    <property type="interactions" value="27"/>
</dbReference>
<dbReference type="FunCoup" id="Q9SF29">
    <property type="interactions" value="1678"/>
</dbReference>
<dbReference type="IntAct" id="Q9SF29">
    <property type="interactions" value="19"/>
</dbReference>
<dbReference type="STRING" id="3702.Q9SF29"/>
<dbReference type="iPTMnet" id="Q9SF29"/>
<dbReference type="SwissPalm" id="Q9SF29"/>
<dbReference type="PaxDb" id="3702-AT3G09740.1"/>
<dbReference type="ProteomicsDB" id="233052"/>
<dbReference type="EnsemblPlants" id="AT3G09740.1">
    <property type="protein sequence ID" value="AT3G09740.1"/>
    <property type="gene ID" value="AT3G09740"/>
</dbReference>
<dbReference type="GeneID" id="820132"/>
<dbReference type="Gramene" id="AT3G09740.1">
    <property type="protein sequence ID" value="AT3G09740.1"/>
    <property type="gene ID" value="AT3G09740"/>
</dbReference>
<dbReference type="KEGG" id="ath:AT3G09740"/>
<dbReference type="Araport" id="AT3G09740"/>
<dbReference type="TAIR" id="AT3G09740">
    <property type="gene designation" value="SYP71"/>
</dbReference>
<dbReference type="eggNOG" id="ENOG502QS7N">
    <property type="taxonomic scope" value="Eukaryota"/>
</dbReference>
<dbReference type="HOGENOM" id="CLU_091888_0_0_1"/>
<dbReference type="InParanoid" id="Q9SF29"/>
<dbReference type="OMA" id="KQSGGWA"/>
<dbReference type="OrthoDB" id="29755at2759"/>
<dbReference type="PhylomeDB" id="Q9SF29"/>
<dbReference type="PRO" id="PR:Q9SF29"/>
<dbReference type="Proteomes" id="UP000006548">
    <property type="component" value="Chromosome 3"/>
</dbReference>
<dbReference type="ExpressionAtlas" id="Q9SF29">
    <property type="expression patterns" value="baseline and differential"/>
</dbReference>
<dbReference type="GO" id="GO:0005829">
    <property type="term" value="C:cytosol"/>
    <property type="evidence" value="ECO:0007005"/>
    <property type="project" value="TAIR"/>
</dbReference>
<dbReference type="GO" id="GO:0005783">
    <property type="term" value="C:endoplasmic reticulum"/>
    <property type="evidence" value="ECO:0000314"/>
    <property type="project" value="TAIR"/>
</dbReference>
<dbReference type="GO" id="GO:0005886">
    <property type="term" value="C:plasma membrane"/>
    <property type="evidence" value="ECO:0000314"/>
    <property type="project" value="TAIR"/>
</dbReference>
<dbReference type="GO" id="GO:0009506">
    <property type="term" value="C:plasmodesma"/>
    <property type="evidence" value="ECO:0007005"/>
    <property type="project" value="TAIR"/>
</dbReference>
<dbReference type="GO" id="GO:0005484">
    <property type="term" value="F:SNAP receptor activity"/>
    <property type="evidence" value="ECO:0007669"/>
    <property type="project" value="InterPro"/>
</dbReference>
<dbReference type="GO" id="GO:0006886">
    <property type="term" value="P:intracellular protein transport"/>
    <property type="evidence" value="ECO:0000304"/>
    <property type="project" value="TAIR"/>
</dbReference>
<dbReference type="GO" id="GO:0006612">
    <property type="term" value="P:protein targeting to membrane"/>
    <property type="evidence" value="ECO:0000314"/>
    <property type="project" value="TAIR"/>
</dbReference>
<dbReference type="CDD" id="cd15841">
    <property type="entry name" value="SNARE_Qc"/>
    <property type="match status" value="1"/>
</dbReference>
<dbReference type="FunFam" id="1.20.5.110:FF:000037">
    <property type="entry name" value="Putative syntaxin-71-like"/>
    <property type="match status" value="1"/>
</dbReference>
<dbReference type="Gene3D" id="1.20.5.110">
    <property type="match status" value="1"/>
</dbReference>
<dbReference type="InterPro" id="IPR045242">
    <property type="entry name" value="Syntaxin"/>
</dbReference>
<dbReference type="InterPro" id="IPR006012">
    <property type="entry name" value="Syntaxin/epimorphin_CS"/>
</dbReference>
<dbReference type="InterPro" id="IPR000727">
    <property type="entry name" value="T_SNARE_dom"/>
</dbReference>
<dbReference type="PANTHER" id="PTHR19957">
    <property type="entry name" value="SYNTAXIN"/>
    <property type="match status" value="1"/>
</dbReference>
<dbReference type="PANTHER" id="PTHR19957:SF124">
    <property type="entry name" value="SYNTAXIN-8"/>
    <property type="match status" value="1"/>
</dbReference>
<dbReference type="Pfam" id="PF05739">
    <property type="entry name" value="SNARE"/>
    <property type="match status" value="1"/>
</dbReference>
<dbReference type="SMART" id="SM00397">
    <property type="entry name" value="t_SNARE"/>
    <property type="match status" value="1"/>
</dbReference>
<dbReference type="SUPFAM" id="SSF58038">
    <property type="entry name" value="SNARE fusion complex"/>
    <property type="match status" value="1"/>
</dbReference>
<dbReference type="PROSITE" id="PS00914">
    <property type="entry name" value="SYNTAXIN"/>
    <property type="match status" value="1"/>
</dbReference>
<dbReference type="PROSITE" id="PS50192">
    <property type="entry name" value="T_SNARE"/>
    <property type="match status" value="1"/>
</dbReference>
<proteinExistence type="evidence at protein level"/>
<accession>Q9SF29</accession>
<comment type="function">
    <text evidence="1">Vesicle trafficking protein that functions in the secretory pathway.</text>
</comment>
<comment type="subunit">
    <text evidence="1">Part of the t-SNARE complex.</text>
</comment>
<comment type="subcellular location">
    <subcellularLocation>
        <location evidence="5">Membrane</location>
        <topology evidence="2">Single-pass type IV membrane protein</topology>
    </subcellularLocation>
</comment>
<comment type="tissue specificity">
    <text>Expressed in root, leaf, stem, flower and silique.</text>
</comment>
<comment type="similarity">
    <text evidence="6">Belongs to the syntaxin family.</text>
</comment>
<keyword id="KW-0175">Coiled coil</keyword>
<keyword id="KW-0472">Membrane</keyword>
<keyword id="KW-0597">Phosphoprotein</keyword>
<keyword id="KW-0653">Protein transport</keyword>
<keyword id="KW-1185">Reference proteome</keyword>
<keyword id="KW-0812">Transmembrane</keyword>
<keyword id="KW-1133">Transmembrane helix</keyword>
<keyword id="KW-0813">Transport</keyword>
<name>SYP71_ARATH</name>
<reference key="1">
    <citation type="journal article" date="2001" name="Mol. Biol. Cell">
        <title>Interactions between syntaxins identify at least five SNARE complexes within the Golgi/prevacuolar system of the Arabidopsis cell.</title>
        <authorList>
            <person name="Sanderfoot A.A."/>
            <person name="Kovaleva V."/>
            <person name="Bassham D.C."/>
            <person name="Raikhel N.V."/>
        </authorList>
    </citation>
    <scope>NUCLEOTIDE SEQUENCE [MRNA]</scope>
</reference>
<reference key="2">
    <citation type="journal article" date="2000" name="Nature">
        <title>Sequence and analysis of chromosome 3 of the plant Arabidopsis thaliana.</title>
        <authorList>
            <person name="Salanoubat M."/>
            <person name="Lemcke K."/>
            <person name="Rieger M."/>
            <person name="Ansorge W."/>
            <person name="Unseld M."/>
            <person name="Fartmann B."/>
            <person name="Valle G."/>
            <person name="Bloecker H."/>
            <person name="Perez-Alonso M."/>
            <person name="Obermaier B."/>
            <person name="Delseny M."/>
            <person name="Boutry M."/>
            <person name="Grivell L.A."/>
            <person name="Mache R."/>
            <person name="Puigdomenech P."/>
            <person name="De Simone V."/>
            <person name="Choisne N."/>
            <person name="Artiguenave F."/>
            <person name="Robert C."/>
            <person name="Brottier P."/>
            <person name="Wincker P."/>
            <person name="Cattolico L."/>
            <person name="Weissenbach J."/>
            <person name="Saurin W."/>
            <person name="Quetier F."/>
            <person name="Schaefer M."/>
            <person name="Mueller-Auer S."/>
            <person name="Gabel C."/>
            <person name="Fuchs M."/>
            <person name="Benes V."/>
            <person name="Wurmbach E."/>
            <person name="Drzonek H."/>
            <person name="Erfle H."/>
            <person name="Jordan N."/>
            <person name="Bangert S."/>
            <person name="Wiedelmann R."/>
            <person name="Kranz H."/>
            <person name="Voss H."/>
            <person name="Holland R."/>
            <person name="Brandt P."/>
            <person name="Nyakatura G."/>
            <person name="Vezzi A."/>
            <person name="D'Angelo M."/>
            <person name="Pallavicini A."/>
            <person name="Toppo S."/>
            <person name="Simionati B."/>
            <person name="Conrad A."/>
            <person name="Hornischer K."/>
            <person name="Kauer G."/>
            <person name="Loehnert T.-H."/>
            <person name="Nordsiek G."/>
            <person name="Reichelt J."/>
            <person name="Scharfe M."/>
            <person name="Schoen O."/>
            <person name="Bargues M."/>
            <person name="Terol J."/>
            <person name="Climent J."/>
            <person name="Navarro P."/>
            <person name="Collado C."/>
            <person name="Perez-Perez A."/>
            <person name="Ottenwaelder B."/>
            <person name="Duchemin D."/>
            <person name="Cooke R."/>
            <person name="Laudie M."/>
            <person name="Berger-Llauro C."/>
            <person name="Purnelle B."/>
            <person name="Masuy D."/>
            <person name="de Haan M."/>
            <person name="Maarse A.C."/>
            <person name="Alcaraz J.-P."/>
            <person name="Cottet A."/>
            <person name="Casacuberta E."/>
            <person name="Monfort A."/>
            <person name="Argiriou A."/>
            <person name="Flores M."/>
            <person name="Liguori R."/>
            <person name="Vitale D."/>
            <person name="Mannhaupt G."/>
            <person name="Haase D."/>
            <person name="Schoof H."/>
            <person name="Rudd S."/>
            <person name="Zaccaria P."/>
            <person name="Mewes H.-W."/>
            <person name="Mayer K.F.X."/>
            <person name="Kaul S."/>
            <person name="Town C.D."/>
            <person name="Koo H.L."/>
            <person name="Tallon L.J."/>
            <person name="Jenkins J."/>
            <person name="Rooney T."/>
            <person name="Rizzo M."/>
            <person name="Walts A."/>
            <person name="Utterback T."/>
            <person name="Fujii C.Y."/>
            <person name="Shea T.P."/>
            <person name="Creasy T.H."/>
            <person name="Haas B."/>
            <person name="Maiti R."/>
            <person name="Wu D."/>
            <person name="Peterson J."/>
            <person name="Van Aken S."/>
            <person name="Pai G."/>
            <person name="Militscher J."/>
            <person name="Sellers P."/>
            <person name="Gill J.E."/>
            <person name="Feldblyum T.V."/>
            <person name="Preuss D."/>
            <person name="Lin X."/>
            <person name="Nierman W.C."/>
            <person name="Salzberg S.L."/>
            <person name="White O."/>
            <person name="Venter J.C."/>
            <person name="Fraser C.M."/>
            <person name="Kaneko T."/>
            <person name="Nakamura Y."/>
            <person name="Sato S."/>
            <person name="Kato T."/>
            <person name="Asamizu E."/>
            <person name="Sasamoto S."/>
            <person name="Kimura T."/>
            <person name="Idesawa K."/>
            <person name="Kawashima K."/>
            <person name="Kishida Y."/>
            <person name="Kiyokawa C."/>
            <person name="Kohara M."/>
            <person name="Matsumoto M."/>
            <person name="Matsuno A."/>
            <person name="Muraki A."/>
            <person name="Nakayama S."/>
            <person name="Nakazaki N."/>
            <person name="Shinpo S."/>
            <person name="Takeuchi C."/>
            <person name="Wada T."/>
            <person name="Watanabe A."/>
            <person name="Yamada M."/>
            <person name="Yasuda M."/>
            <person name="Tabata S."/>
        </authorList>
    </citation>
    <scope>NUCLEOTIDE SEQUENCE [LARGE SCALE GENOMIC DNA]</scope>
    <source>
        <strain>cv. Columbia</strain>
    </source>
</reference>
<reference key="3">
    <citation type="journal article" date="2017" name="Plant J.">
        <title>Araport11: a complete reannotation of the Arabidopsis thaliana reference genome.</title>
        <authorList>
            <person name="Cheng C.Y."/>
            <person name="Krishnakumar V."/>
            <person name="Chan A.P."/>
            <person name="Thibaud-Nissen F."/>
            <person name="Schobel S."/>
            <person name="Town C.D."/>
        </authorList>
    </citation>
    <scope>GENOME REANNOTATION</scope>
    <source>
        <strain>cv. Columbia</strain>
    </source>
</reference>
<reference key="4">
    <citation type="journal article" date="2003" name="Science">
        <title>Empirical analysis of transcriptional activity in the Arabidopsis genome.</title>
        <authorList>
            <person name="Yamada K."/>
            <person name="Lim J."/>
            <person name="Dale J.M."/>
            <person name="Chen H."/>
            <person name="Shinn P."/>
            <person name="Palm C.J."/>
            <person name="Southwick A.M."/>
            <person name="Wu H.C."/>
            <person name="Kim C.J."/>
            <person name="Nguyen M."/>
            <person name="Pham P.K."/>
            <person name="Cheuk R.F."/>
            <person name="Karlin-Newmann G."/>
            <person name="Liu S.X."/>
            <person name="Lam B."/>
            <person name="Sakano H."/>
            <person name="Wu T."/>
            <person name="Yu G."/>
            <person name="Miranda M."/>
            <person name="Quach H.L."/>
            <person name="Tripp M."/>
            <person name="Chang C.H."/>
            <person name="Lee J.M."/>
            <person name="Toriumi M.J."/>
            <person name="Chan M.M."/>
            <person name="Tang C.C."/>
            <person name="Onodera C.S."/>
            <person name="Deng J.M."/>
            <person name="Akiyama K."/>
            <person name="Ansari Y."/>
            <person name="Arakawa T."/>
            <person name="Banh J."/>
            <person name="Banno F."/>
            <person name="Bowser L."/>
            <person name="Brooks S.Y."/>
            <person name="Carninci P."/>
            <person name="Chao Q."/>
            <person name="Choy N."/>
            <person name="Enju A."/>
            <person name="Goldsmith A.D."/>
            <person name="Gurjal M."/>
            <person name="Hansen N.F."/>
            <person name="Hayashizaki Y."/>
            <person name="Johnson-Hopson C."/>
            <person name="Hsuan V.W."/>
            <person name="Iida K."/>
            <person name="Karnes M."/>
            <person name="Khan S."/>
            <person name="Koesema E."/>
            <person name="Ishida J."/>
            <person name="Jiang P.X."/>
            <person name="Jones T."/>
            <person name="Kawai J."/>
            <person name="Kamiya A."/>
            <person name="Meyers C."/>
            <person name="Nakajima M."/>
            <person name="Narusaka M."/>
            <person name="Seki M."/>
            <person name="Sakurai T."/>
            <person name="Satou M."/>
            <person name="Tamse R."/>
            <person name="Vaysberg M."/>
            <person name="Wallender E.K."/>
            <person name="Wong C."/>
            <person name="Yamamura Y."/>
            <person name="Yuan S."/>
            <person name="Shinozaki K."/>
            <person name="Davis R.W."/>
            <person name="Theologis A."/>
            <person name="Ecker J.R."/>
        </authorList>
    </citation>
    <scope>NUCLEOTIDE SEQUENCE [LARGE SCALE MRNA]</scope>
    <source>
        <strain>cv. Columbia</strain>
    </source>
</reference>
<reference key="5">
    <citation type="journal article" date="2004" name="Mol. Cell. Proteomics">
        <title>Identification of new intrinsic proteins in Arabidopsis plasma membrane proteome.</title>
        <authorList>
            <person name="Marmagne A."/>
            <person name="Rouet M.-A."/>
            <person name="Ferro M."/>
            <person name="Rolland N."/>
            <person name="Alcon C."/>
            <person name="Joyard J."/>
            <person name="Garin J."/>
            <person name="Barbier-Brygoo H."/>
            <person name="Ephritikhine G."/>
        </authorList>
    </citation>
    <scope>IDENTIFICATION BY MASS SPECTROMETRY</scope>
    <scope>SUBCELLULAR LOCATION [LARGE SCALE ANALYSIS]</scope>
</reference>
<reference key="6">
    <citation type="journal article" date="2009" name="Plant Physiol.">
        <title>Large-scale Arabidopsis phosphoproteome profiling reveals novel chloroplast kinase substrates and phosphorylation networks.</title>
        <authorList>
            <person name="Reiland S."/>
            <person name="Messerli G."/>
            <person name="Baerenfaller K."/>
            <person name="Gerrits B."/>
            <person name="Endler A."/>
            <person name="Grossmann J."/>
            <person name="Gruissem W."/>
            <person name="Baginsky S."/>
        </authorList>
    </citation>
    <scope>PHOSPHORYLATION [LARGE SCALE ANALYSIS] AT SER-12</scope>
    <scope>IDENTIFICATION BY MASS SPECTROMETRY [LARGE SCALE ANALYSIS]</scope>
</reference>
<gene>
    <name type="primary">SYP71</name>
    <name type="ordered locus">At3g09740</name>
    <name type="ORF">F11F8_33</name>
</gene>